<gene>
    <name evidence="1" type="primary">fliE</name>
    <name type="ordered locus">PP_4370</name>
</gene>
<name>FLIE_PSEPK</name>
<organism>
    <name type="scientific">Pseudomonas putida (strain ATCC 47054 / DSM 6125 / CFBP 8728 / NCIMB 11950 / KT2440)</name>
    <dbReference type="NCBI Taxonomy" id="160488"/>
    <lineage>
        <taxon>Bacteria</taxon>
        <taxon>Pseudomonadati</taxon>
        <taxon>Pseudomonadota</taxon>
        <taxon>Gammaproteobacteria</taxon>
        <taxon>Pseudomonadales</taxon>
        <taxon>Pseudomonadaceae</taxon>
        <taxon>Pseudomonas</taxon>
    </lineage>
</organism>
<evidence type="ECO:0000255" key="1">
    <source>
        <dbReference type="HAMAP-Rule" id="MF_00724"/>
    </source>
</evidence>
<protein>
    <recommendedName>
        <fullName evidence="1">Flagellar hook-basal body complex protein FliE</fullName>
    </recommendedName>
</protein>
<comment type="subcellular location">
    <subcellularLocation>
        <location evidence="1">Bacterial flagellum basal body</location>
    </subcellularLocation>
</comment>
<comment type="similarity">
    <text evidence="1">Belongs to the FliE family.</text>
</comment>
<accession>Q88ET3</accession>
<feature type="chain" id="PRO_0000105557" description="Flagellar hook-basal body complex protein FliE">
    <location>
        <begin position="1"/>
        <end position="110"/>
    </location>
</feature>
<reference key="1">
    <citation type="journal article" date="2002" name="Environ. Microbiol.">
        <title>Complete genome sequence and comparative analysis of the metabolically versatile Pseudomonas putida KT2440.</title>
        <authorList>
            <person name="Nelson K.E."/>
            <person name="Weinel C."/>
            <person name="Paulsen I.T."/>
            <person name="Dodson R.J."/>
            <person name="Hilbert H."/>
            <person name="Martins dos Santos V.A.P."/>
            <person name="Fouts D.E."/>
            <person name="Gill S.R."/>
            <person name="Pop M."/>
            <person name="Holmes M."/>
            <person name="Brinkac L.M."/>
            <person name="Beanan M.J."/>
            <person name="DeBoy R.T."/>
            <person name="Daugherty S.C."/>
            <person name="Kolonay J.F."/>
            <person name="Madupu R."/>
            <person name="Nelson W.C."/>
            <person name="White O."/>
            <person name="Peterson J.D."/>
            <person name="Khouri H.M."/>
            <person name="Hance I."/>
            <person name="Chris Lee P."/>
            <person name="Holtzapple E.K."/>
            <person name="Scanlan D."/>
            <person name="Tran K."/>
            <person name="Moazzez A."/>
            <person name="Utterback T.R."/>
            <person name="Rizzo M."/>
            <person name="Lee K."/>
            <person name="Kosack D."/>
            <person name="Moestl D."/>
            <person name="Wedler H."/>
            <person name="Lauber J."/>
            <person name="Stjepandic D."/>
            <person name="Hoheisel J."/>
            <person name="Straetz M."/>
            <person name="Heim S."/>
            <person name="Kiewitz C."/>
            <person name="Eisen J.A."/>
            <person name="Timmis K.N."/>
            <person name="Duesterhoeft A."/>
            <person name="Tuemmler B."/>
            <person name="Fraser C.M."/>
        </authorList>
    </citation>
    <scope>NUCLEOTIDE SEQUENCE [LARGE SCALE GENOMIC DNA]</scope>
    <source>
        <strain>ATCC 47054 / DSM 6125 / CFBP 8728 / NCIMB 11950 / KT2440</strain>
    </source>
</reference>
<dbReference type="EMBL" id="AE015451">
    <property type="protein sequence ID" value="AAN69948.1"/>
    <property type="molecule type" value="Genomic_DNA"/>
</dbReference>
<dbReference type="RefSeq" id="NP_746484.1">
    <property type="nucleotide sequence ID" value="NC_002947.4"/>
</dbReference>
<dbReference type="RefSeq" id="WP_003254438.1">
    <property type="nucleotide sequence ID" value="NZ_CP169744.1"/>
</dbReference>
<dbReference type="SMR" id="Q88ET3"/>
<dbReference type="STRING" id="160488.PP_4370"/>
<dbReference type="PaxDb" id="160488-PP_4370"/>
<dbReference type="DNASU" id="1041797"/>
<dbReference type="GeneID" id="83678920"/>
<dbReference type="KEGG" id="ppu:PP_4370"/>
<dbReference type="PATRIC" id="fig|160488.4.peg.4644"/>
<dbReference type="eggNOG" id="COG1677">
    <property type="taxonomic scope" value="Bacteria"/>
</dbReference>
<dbReference type="HOGENOM" id="CLU_147249_0_0_6"/>
<dbReference type="OrthoDB" id="8909229at2"/>
<dbReference type="PhylomeDB" id="Q88ET3"/>
<dbReference type="BioCyc" id="PPUT160488:G1G01-4648-MONOMER"/>
<dbReference type="Proteomes" id="UP000000556">
    <property type="component" value="Chromosome"/>
</dbReference>
<dbReference type="GO" id="GO:0009425">
    <property type="term" value="C:bacterial-type flagellum basal body"/>
    <property type="evidence" value="ECO:0007669"/>
    <property type="project" value="UniProtKB-SubCell"/>
</dbReference>
<dbReference type="GO" id="GO:0003774">
    <property type="term" value="F:cytoskeletal motor activity"/>
    <property type="evidence" value="ECO:0007669"/>
    <property type="project" value="InterPro"/>
</dbReference>
<dbReference type="GO" id="GO:0005198">
    <property type="term" value="F:structural molecule activity"/>
    <property type="evidence" value="ECO:0007669"/>
    <property type="project" value="InterPro"/>
</dbReference>
<dbReference type="GO" id="GO:0071973">
    <property type="term" value="P:bacterial-type flagellum-dependent cell motility"/>
    <property type="evidence" value="ECO:0007669"/>
    <property type="project" value="InterPro"/>
</dbReference>
<dbReference type="HAMAP" id="MF_00724">
    <property type="entry name" value="FliE"/>
    <property type="match status" value="1"/>
</dbReference>
<dbReference type="InterPro" id="IPR001624">
    <property type="entry name" value="FliE"/>
</dbReference>
<dbReference type="NCBIfam" id="TIGR00205">
    <property type="entry name" value="fliE"/>
    <property type="match status" value="1"/>
</dbReference>
<dbReference type="PANTHER" id="PTHR34653">
    <property type="match status" value="1"/>
</dbReference>
<dbReference type="PANTHER" id="PTHR34653:SF1">
    <property type="entry name" value="FLAGELLAR HOOK-BASAL BODY COMPLEX PROTEIN FLIE"/>
    <property type="match status" value="1"/>
</dbReference>
<dbReference type="Pfam" id="PF02049">
    <property type="entry name" value="FliE"/>
    <property type="match status" value="1"/>
</dbReference>
<dbReference type="PRINTS" id="PR01006">
    <property type="entry name" value="FLGHOOKFLIE"/>
</dbReference>
<keyword id="KW-0975">Bacterial flagellum</keyword>
<keyword id="KW-1185">Reference proteome</keyword>
<sequence>MSQGVEFNRLMLDMRAMQADAMSLPKVTAAPELAPGQSTFADMLGQAIGKVHETQQASTQLANAFEIGKSGVDLTDVMIASQKASVSMQAMTQVRNKLVQAYQDIMQMPV</sequence>
<proteinExistence type="inferred from homology"/>